<protein>
    <recommendedName>
        <fullName evidence="4">Subtelomeric hrmA-associated cluster protein cgnA</fullName>
    </recommendedName>
    <alternativeName>
        <fullName evidence="4">Collagen-like protein cgnA</fullName>
        <shortName evidence="4">CLP</shortName>
    </alternativeName>
</protein>
<organism>
    <name type="scientific">Aspergillus fumigatus (strain ATCC MYA-4609 / CBS 101355 / FGSC A1100 / Af293)</name>
    <name type="common">Neosartorya fumigata</name>
    <dbReference type="NCBI Taxonomy" id="330879"/>
    <lineage>
        <taxon>Eukaryota</taxon>
        <taxon>Fungi</taxon>
        <taxon>Dikarya</taxon>
        <taxon>Ascomycota</taxon>
        <taxon>Pezizomycotina</taxon>
        <taxon>Eurotiomycetes</taxon>
        <taxon>Eurotiomycetidae</taxon>
        <taxon>Eurotiales</taxon>
        <taxon>Aspergillaceae</taxon>
        <taxon>Aspergillus</taxon>
        <taxon>Aspergillus subgen. Fumigati</taxon>
    </lineage>
</organism>
<accession>Q4WW98</accession>
<keyword id="KW-0130">Cell adhesion</keyword>
<keyword id="KW-1185">Reference proteome</keyword>
<keyword id="KW-0677">Repeat</keyword>
<keyword id="KW-0964">Secreted</keyword>
<keyword id="KW-0843">Virulence</keyword>
<dbReference type="EMBL" id="AAHF01000003">
    <property type="protein sequence ID" value="EAL91128.1"/>
    <property type="molecule type" value="Genomic_DNA"/>
</dbReference>
<dbReference type="RefSeq" id="XP_753166.1">
    <property type="nucleotide sequence ID" value="XM_748073.1"/>
</dbReference>
<dbReference type="EnsemblFungi" id="EAL91128">
    <property type="protein sequence ID" value="EAL91128"/>
    <property type="gene ID" value="AFUA_5G14910"/>
</dbReference>
<dbReference type="GeneID" id="3510949"/>
<dbReference type="KEGG" id="afm:AFUA_5G14910"/>
<dbReference type="VEuPathDB" id="FungiDB:Afu5g14910"/>
<dbReference type="eggNOG" id="KOG3544">
    <property type="taxonomic scope" value="Eukaryota"/>
</dbReference>
<dbReference type="HOGENOM" id="CLU_1992109_0_0_1"/>
<dbReference type="InParanoid" id="Q4WW98"/>
<dbReference type="Proteomes" id="UP000002530">
    <property type="component" value="Chromosome 5"/>
</dbReference>
<dbReference type="GO" id="GO:0005576">
    <property type="term" value="C:extracellular region"/>
    <property type="evidence" value="ECO:0007669"/>
    <property type="project" value="UniProtKB-SubCell"/>
</dbReference>
<dbReference type="GO" id="GO:0007155">
    <property type="term" value="P:cell adhesion"/>
    <property type="evidence" value="ECO:0007669"/>
    <property type="project" value="UniProtKB-KW"/>
</dbReference>
<dbReference type="InterPro" id="IPR008160">
    <property type="entry name" value="Collagen"/>
</dbReference>
<dbReference type="InterPro" id="IPR050938">
    <property type="entry name" value="Collagen_Structural_Proteins"/>
</dbReference>
<dbReference type="PANTHER" id="PTHR37456:SF6">
    <property type="entry name" value="COLLAGEN ALPHA-1(XXIII) CHAIN-LIKE ISOFORM X2"/>
    <property type="match status" value="1"/>
</dbReference>
<dbReference type="PANTHER" id="PTHR37456">
    <property type="entry name" value="SI:CH211-266K2.1"/>
    <property type="match status" value="1"/>
</dbReference>
<dbReference type="Pfam" id="PF01391">
    <property type="entry name" value="Collagen"/>
    <property type="match status" value="2"/>
</dbReference>
<sequence length="143" mass="14979">MVLIIEIIKIGQIGPIGQRGQSGQRGQSGQRGQSGQIGQSGQSGQSGQIGQIGQIGQIGQIGQIGQIGQIGQIGQIGQIGQIGQIGQIGQIGQIGQARRTGRTGRTVHRRMLQASSSFNISPDISICRRATRNMGEEERPLGC</sequence>
<reference key="1">
    <citation type="journal article" date="2005" name="Nature">
        <title>Genomic sequence of the pathogenic and allergenic filamentous fungus Aspergillus fumigatus.</title>
        <authorList>
            <person name="Nierman W.C."/>
            <person name="Pain A."/>
            <person name="Anderson M.J."/>
            <person name="Wortman J.R."/>
            <person name="Kim H.S."/>
            <person name="Arroyo J."/>
            <person name="Berriman M."/>
            <person name="Abe K."/>
            <person name="Archer D.B."/>
            <person name="Bermejo C."/>
            <person name="Bennett J.W."/>
            <person name="Bowyer P."/>
            <person name="Chen D."/>
            <person name="Collins M."/>
            <person name="Coulsen R."/>
            <person name="Davies R."/>
            <person name="Dyer P.S."/>
            <person name="Farman M.L."/>
            <person name="Fedorova N."/>
            <person name="Fedorova N.D."/>
            <person name="Feldblyum T.V."/>
            <person name="Fischer R."/>
            <person name="Fosker N."/>
            <person name="Fraser A."/>
            <person name="Garcia J.L."/>
            <person name="Garcia M.J."/>
            <person name="Goble A."/>
            <person name="Goldman G.H."/>
            <person name="Gomi K."/>
            <person name="Griffith-Jones S."/>
            <person name="Gwilliam R."/>
            <person name="Haas B.J."/>
            <person name="Haas H."/>
            <person name="Harris D.E."/>
            <person name="Horiuchi H."/>
            <person name="Huang J."/>
            <person name="Humphray S."/>
            <person name="Jimenez J."/>
            <person name="Keller N."/>
            <person name="Khouri H."/>
            <person name="Kitamoto K."/>
            <person name="Kobayashi T."/>
            <person name="Konzack S."/>
            <person name="Kulkarni R."/>
            <person name="Kumagai T."/>
            <person name="Lafton A."/>
            <person name="Latge J.-P."/>
            <person name="Li W."/>
            <person name="Lord A."/>
            <person name="Lu C."/>
            <person name="Majoros W.H."/>
            <person name="May G.S."/>
            <person name="Miller B.L."/>
            <person name="Mohamoud Y."/>
            <person name="Molina M."/>
            <person name="Monod M."/>
            <person name="Mouyna I."/>
            <person name="Mulligan S."/>
            <person name="Murphy L.D."/>
            <person name="O'Neil S."/>
            <person name="Paulsen I."/>
            <person name="Penalva M.A."/>
            <person name="Pertea M."/>
            <person name="Price C."/>
            <person name="Pritchard B.L."/>
            <person name="Quail M.A."/>
            <person name="Rabbinowitsch E."/>
            <person name="Rawlins N."/>
            <person name="Rajandream M.A."/>
            <person name="Reichard U."/>
            <person name="Renauld H."/>
            <person name="Robson G.D."/>
            <person name="Rodriguez de Cordoba S."/>
            <person name="Rodriguez-Pena J.M."/>
            <person name="Ronning C.M."/>
            <person name="Rutter S."/>
            <person name="Salzberg S.L."/>
            <person name="Sanchez M."/>
            <person name="Sanchez-Ferrero J.C."/>
            <person name="Saunders D."/>
            <person name="Seeger K."/>
            <person name="Squares R."/>
            <person name="Squares S."/>
            <person name="Takeuchi M."/>
            <person name="Tekaia F."/>
            <person name="Turner G."/>
            <person name="Vazquez de Aldana C.R."/>
            <person name="Weidman J."/>
            <person name="White O."/>
            <person name="Woodward J.R."/>
            <person name="Yu J.-H."/>
            <person name="Fraser C.M."/>
            <person name="Galagan J.E."/>
            <person name="Asai K."/>
            <person name="Machida M."/>
            <person name="Hall N."/>
            <person name="Barrell B.G."/>
            <person name="Denning D.W."/>
        </authorList>
    </citation>
    <scope>NUCLEOTIDE SEQUENCE [LARGE SCALE GENOMIC DNA]</scope>
    <source>
        <strain>ATCC MYA-4609 / CBS 101355 / FGSC A1100 / Af293</strain>
    </source>
</reference>
<reference key="2">
    <citation type="journal article" date="2019" name="Nat. Microbiol.">
        <title>Fungal biofilm morphology impacts hypoxia fitness and disease progression.</title>
        <authorList>
            <person name="Kowalski C.H."/>
            <person name="Kerkaert J.D."/>
            <person name="Liu K.W."/>
            <person name="Bond M.C."/>
            <person name="Hartmann R."/>
            <person name="Nadell C.D."/>
            <person name="Stajich J.E."/>
            <person name="Cramer R.A."/>
        </authorList>
    </citation>
    <scope>FUNCTION</scope>
    <scope>INDUCTION</scope>
    <scope>DISRUPTION PHENOTYPE</scope>
    <scope>DOMAIN</scope>
</reference>
<feature type="chain" id="PRO_0000460415" description="Subtelomeric hrmA-associated cluster protein cgnA">
    <location>
        <begin position="1"/>
        <end position="143"/>
    </location>
</feature>
<feature type="domain" description="Collagen-like" evidence="1">
    <location>
        <begin position="11"/>
        <end position="68"/>
    </location>
</feature>
<feature type="repeat" description="G-Q-I/R/S 1" evidence="5">
    <location>
        <begin position="11"/>
        <end position="13"/>
    </location>
</feature>
<feature type="repeat" description="G-Q-I/R/S 2" evidence="5">
    <location>
        <begin position="14"/>
        <end position="16"/>
    </location>
</feature>
<feature type="repeat" description="G-Q-I/R/S 3" evidence="5">
    <location>
        <begin position="17"/>
        <end position="19"/>
    </location>
</feature>
<feature type="repeat" description="G-Q-I/R/S 4" evidence="5">
    <location>
        <begin position="20"/>
        <end position="22"/>
    </location>
</feature>
<feature type="repeat" description="G-Q-I/R/S 5" evidence="5">
    <location>
        <begin position="23"/>
        <end position="25"/>
    </location>
</feature>
<feature type="repeat" description="G-Q-I/R/S 6" evidence="5">
    <location>
        <begin position="26"/>
        <end position="28"/>
    </location>
</feature>
<feature type="repeat" description="G-Q-I/R/S 7" evidence="5">
    <location>
        <begin position="29"/>
        <end position="31"/>
    </location>
</feature>
<feature type="repeat" description="G-Q-I/R/S 8" evidence="5">
    <location>
        <begin position="32"/>
        <end position="34"/>
    </location>
</feature>
<feature type="repeat" description="G-Q-I/R/S 9" evidence="5">
    <location>
        <begin position="35"/>
        <end position="37"/>
    </location>
</feature>
<feature type="repeat" description="G-Q-I/R/S 10" evidence="5">
    <location>
        <begin position="38"/>
        <end position="40"/>
    </location>
</feature>
<feature type="repeat" description="G-Q-I/R/S 11" evidence="5">
    <location>
        <begin position="41"/>
        <end position="43"/>
    </location>
</feature>
<feature type="repeat" description="G-Q-I/R/S 12" evidence="5">
    <location>
        <begin position="44"/>
        <end position="46"/>
    </location>
</feature>
<feature type="repeat" description="G-Q-I/R/S 13" evidence="5">
    <location>
        <begin position="47"/>
        <end position="49"/>
    </location>
</feature>
<feature type="repeat" description="G-Q-I/R/S 14" evidence="5">
    <location>
        <begin position="50"/>
        <end position="52"/>
    </location>
</feature>
<feature type="repeat" description="G-Q-I/R/S 15" evidence="5">
    <location>
        <begin position="53"/>
        <end position="55"/>
    </location>
</feature>
<feature type="repeat" description="G-Q-I/R/S 16" evidence="5">
    <location>
        <begin position="56"/>
        <end position="58"/>
    </location>
</feature>
<feature type="repeat" description="G-Q-I/R/S 17" evidence="5">
    <location>
        <begin position="59"/>
        <end position="61"/>
    </location>
</feature>
<feature type="repeat" description="G-Q-I/R/S 18" evidence="5">
    <location>
        <begin position="62"/>
        <end position="64"/>
    </location>
</feature>
<feature type="repeat" description="G-Q-I/R/S 19" evidence="5">
    <location>
        <begin position="65"/>
        <end position="67"/>
    </location>
</feature>
<feature type="repeat" description="G-Q-I/R/S 20" evidence="5">
    <location>
        <begin position="68"/>
        <end position="70"/>
    </location>
</feature>
<feature type="repeat" description="G-Q-I/R/S 21" evidence="5">
    <location>
        <begin position="71"/>
        <end position="73"/>
    </location>
</feature>
<feature type="repeat" description="G-Q-I/R/S 22" evidence="5">
    <location>
        <begin position="74"/>
        <end position="76"/>
    </location>
</feature>
<feature type="repeat" description="G-Q-I/R/S 23" evidence="5">
    <location>
        <begin position="77"/>
        <end position="79"/>
    </location>
</feature>
<feature type="repeat" description="G-Q-I/R/S 24" evidence="5">
    <location>
        <begin position="80"/>
        <end position="82"/>
    </location>
</feature>
<feature type="repeat" description="G-Q-I/R/S 25" evidence="5">
    <location>
        <begin position="83"/>
        <end position="85"/>
    </location>
</feature>
<feature type="repeat" description="G-Q-I/R/S 26" evidence="5">
    <location>
        <begin position="86"/>
        <end position="88"/>
    </location>
</feature>
<feature type="repeat" description="G-Q-I/R/S 27" evidence="5">
    <location>
        <begin position="89"/>
        <end position="91"/>
    </location>
</feature>
<feature type="repeat" description="G-Q-I/R/S 28" evidence="5">
    <location>
        <begin position="92"/>
        <end position="94"/>
    </location>
</feature>
<feature type="repeat" description="G-Q-I/R/S 29" evidence="5">
    <location>
        <begin position="95"/>
        <end position="97"/>
    </location>
</feature>
<feature type="region of interest" description="29 X 3 AA approximate tandem repeats of G-Q-I/R/S" evidence="5">
    <location>
        <begin position="11"/>
        <end position="97"/>
    </location>
</feature>
<feature type="region of interest" description="Disordered" evidence="2">
    <location>
        <begin position="16"/>
        <end position="49"/>
    </location>
</feature>
<name>CGNA_ASPFU</name>
<evidence type="ECO:0000255" key="1"/>
<evidence type="ECO:0000256" key="2">
    <source>
        <dbReference type="SAM" id="MobiDB-lite"/>
    </source>
</evidence>
<evidence type="ECO:0000269" key="3">
    <source>
    </source>
</evidence>
<evidence type="ECO:0000303" key="4">
    <source>
    </source>
</evidence>
<evidence type="ECO:0000305" key="5">
    <source>
    </source>
</evidence>
<comment type="function">
    <text evidence="3">Collagen-like protein; part of the subtelomeric hrmA-associated cluster (HAC) containing genes that alter the hyphal surface (such as reduced total chitin or increased beta-glucan exposure) and perturb inter-hyphal interactions within the developing biofilms, resulting in a loss of vertically aligned polarized growing filaments (PubMed:31548684). Consequently, this hypoxia-typic morphotype (called H-MORPH) with altered biofilm architecture leads to increased hypoxia fitness, increased host inflammation, rapid disease progression, and mortality in a murine model of invasive aspergillosis (PubMed:31548684). CgnA is directly involved in the reduction of total surface chitin and the increase of beta-glucan exposure, and mediates the detachment of the extracellular matrix and especially of its component galactosaminogalactan (GAG) (PubMed:31548684).</text>
</comment>
<comment type="subcellular location">
    <subcellularLocation>
        <location evidence="5">Secreted</location>
    </subcellularLocation>
</comment>
<comment type="induction">
    <text evidence="3">Expression is regulated by the hypoxia responsive morphology factor A (hrmA).</text>
</comment>
<comment type="domain">
    <text evidence="3">Contains a tripeptide G-Q-I/S/R repeated region and lacks a canonical secretion signal.</text>
</comment>
<comment type="disruption phenotype">
    <text evidence="3">Impairs the formation of the hypoxia-typic morphotype, increases surface adherence and reduces the hypoxia fitness.</text>
</comment>
<gene>
    <name evidence="4" type="primary">cgnA</name>
    <name type="ORF">AFUA_5G14910</name>
</gene>
<proteinExistence type="evidence at transcript level"/>